<proteinExistence type="evidence at protein level"/>
<protein>
    <recommendedName>
        <fullName evidence="3">Large ribosomal subunit protein eL39</fullName>
    </recommendedName>
    <alternativeName>
        <fullName>60S ribosomal protein L39</fullName>
    </alternativeName>
</protein>
<sequence>MPSQKSFRTKQKLAKAQKQNRPLPQWIRLRTDNKIRYNAKRRHWRRTKLGI</sequence>
<feature type="chain" id="PRO_0000456501" description="Large ribosomal subunit protein eL39">
    <location>
        <begin position="1"/>
        <end position="51"/>
    </location>
</feature>
<feature type="region of interest" description="Disordered" evidence="1">
    <location>
        <begin position="1"/>
        <end position="23"/>
    </location>
</feature>
<gene>
    <name evidence="3" type="primary">RPL39</name>
    <name type="ORF">CAALFM_C106470WA</name>
</gene>
<organism>
    <name type="scientific">Candida albicans (strain SC5314 / ATCC MYA-2876)</name>
    <name type="common">Yeast</name>
    <dbReference type="NCBI Taxonomy" id="237561"/>
    <lineage>
        <taxon>Eukaryota</taxon>
        <taxon>Fungi</taxon>
        <taxon>Dikarya</taxon>
        <taxon>Ascomycota</taxon>
        <taxon>Saccharomycotina</taxon>
        <taxon>Pichiomycetes</taxon>
        <taxon>Debaryomycetaceae</taxon>
        <taxon>Candida/Lodderomyces clade</taxon>
        <taxon>Candida</taxon>
    </lineage>
</organism>
<keyword id="KW-0002">3D-structure</keyword>
<keyword id="KW-0963">Cytoplasm</keyword>
<keyword id="KW-1185">Reference proteome</keyword>
<keyword id="KW-0687">Ribonucleoprotein</keyword>
<keyword id="KW-0689">Ribosomal protein</keyword>
<comment type="function">
    <text evidence="5">Component of the ribosome, a large ribonucleoprotein complex responsible for the synthesis of proteins in the cell. The small ribosomal subunit (SSU) binds messenger RNAs (mRNAs) and translates the encoded message by selecting cognate aminoacyl-transfer RNA (tRNA) molecules. The large subunit (LSU) contains the ribosomal catalytic site termed the peptidyl transferase center (PTC), which catalyzes the formation of peptide bonds, thereby polymerizing the amino acids delivered by tRNAs into a polypeptide chain. The nascent polypeptides leave the ribosome through a tunnel in the LSU and interact with protein factors that function in enzymatic processing, targeting, and the membrane insertion of nascent chains at the exit of the ribosomal tunnel.</text>
</comment>
<comment type="subunit">
    <text evidence="2">Component of the large ribosomal subunit (PubMed:35613268). Mature ribosomes consist of a small (40S) and a large (60S) subunit (PubMed:35613268). The 40S subunit contains about 32 different proteins and 1 molecule of RNA (18S) (PubMed:35613268). The 60S subunit contains 45 different proteins and 3 molecules of RNA (25S, 5.8S and 5S) (PubMed:35613268).</text>
</comment>
<comment type="subcellular location">
    <subcellularLocation>
        <location evidence="5">Cytoplasm</location>
    </subcellularLocation>
</comment>
<comment type="similarity">
    <text evidence="4">Belongs to the eukaryotic ribosomal protein eL39 family.</text>
</comment>
<accession>A0A1D8PDT4</accession>
<reference key="1">
    <citation type="journal article" date="2004" name="Proc. Natl. Acad. Sci. U.S.A.">
        <title>The diploid genome sequence of Candida albicans.</title>
        <authorList>
            <person name="Jones T."/>
            <person name="Federspiel N.A."/>
            <person name="Chibana H."/>
            <person name="Dungan J."/>
            <person name="Kalman S."/>
            <person name="Magee B.B."/>
            <person name="Newport G."/>
            <person name="Thorstenson Y.R."/>
            <person name="Agabian N."/>
            <person name="Magee P.T."/>
            <person name="Davis R.W."/>
            <person name="Scherer S."/>
        </authorList>
    </citation>
    <scope>NUCLEOTIDE SEQUENCE [LARGE SCALE GENOMIC DNA]</scope>
    <source>
        <strain>SC5314 / ATCC MYA-2876</strain>
    </source>
</reference>
<reference key="2">
    <citation type="journal article" date="2007" name="Genome Biol.">
        <title>Assembly of the Candida albicans genome into sixteen supercontigs aligned on the eight chromosomes.</title>
        <authorList>
            <person name="van het Hoog M."/>
            <person name="Rast T.J."/>
            <person name="Martchenko M."/>
            <person name="Grindle S."/>
            <person name="Dignard D."/>
            <person name="Hogues H."/>
            <person name="Cuomo C."/>
            <person name="Berriman M."/>
            <person name="Scherer S."/>
            <person name="Magee B.B."/>
            <person name="Whiteway M."/>
            <person name="Chibana H."/>
            <person name="Nantel A."/>
            <person name="Magee P.T."/>
        </authorList>
    </citation>
    <scope>GENOME REANNOTATION</scope>
    <source>
        <strain>SC5314 / ATCC MYA-2876</strain>
    </source>
</reference>
<reference key="3">
    <citation type="journal article" date="2013" name="Genome Biol.">
        <title>Assembly of a phased diploid Candida albicans genome facilitates allele-specific measurements and provides a simple model for repeat and indel structure.</title>
        <authorList>
            <person name="Muzzey D."/>
            <person name="Schwartz K."/>
            <person name="Weissman J.S."/>
            <person name="Sherlock G."/>
        </authorList>
    </citation>
    <scope>NUCLEOTIDE SEQUENCE [LARGE SCALE GENOMIC DNA]</scope>
    <scope>GENOME REANNOTATION</scope>
    <source>
        <strain>SC5314 / ATCC MYA-2876</strain>
    </source>
</reference>
<reference evidence="6 7 8" key="4">
    <citation type="journal article" date="2022" name="Sci. Adv.">
        <title>E-site drug specificity of the human pathogen Candida albicans ribosome.</title>
        <authorList>
            <person name="Zgadzay Y."/>
            <person name="Kolosova O."/>
            <person name="Stetsenko A."/>
            <person name="Wu C."/>
            <person name="Bruchlen D."/>
            <person name="Usachev K."/>
            <person name="Validov S."/>
            <person name="Jenner L."/>
            <person name="Rogachev A."/>
            <person name="Yusupova G."/>
            <person name="Sachs M.S."/>
            <person name="Guskov A."/>
            <person name="Yusupov M."/>
        </authorList>
    </citation>
    <scope>STRUCTURE BY ELECTRON MICROSCOPY (2.32 ANGSTROMS) OF THE 80S RIBOSOME</scope>
    <scope>SUBUNIT</scope>
</reference>
<evidence type="ECO:0000256" key="1">
    <source>
        <dbReference type="SAM" id="MobiDB-lite"/>
    </source>
</evidence>
<evidence type="ECO:0000269" key="2">
    <source>
    </source>
</evidence>
<evidence type="ECO:0000303" key="3">
    <source>
    </source>
</evidence>
<evidence type="ECO:0000305" key="4"/>
<evidence type="ECO:0000305" key="5">
    <source>
    </source>
</evidence>
<evidence type="ECO:0007744" key="6">
    <source>
        <dbReference type="PDB" id="7PZY"/>
    </source>
</evidence>
<evidence type="ECO:0007744" key="7">
    <source>
        <dbReference type="PDB" id="7Q0F"/>
    </source>
</evidence>
<evidence type="ECO:0007744" key="8">
    <source>
        <dbReference type="PDB" id="7Q0P"/>
    </source>
</evidence>
<dbReference type="EMBL" id="CP017623">
    <property type="protein sequence ID" value="AOW26304.1"/>
    <property type="molecule type" value="Genomic_DNA"/>
</dbReference>
<dbReference type="RefSeq" id="XP_019330659.1">
    <property type="nucleotide sequence ID" value="XM_019475114.1"/>
</dbReference>
<dbReference type="PDB" id="7PZY">
    <property type="method" value="EM"/>
    <property type="resolution" value="2.32 A"/>
    <property type="chains" value="AM=1-51"/>
</dbReference>
<dbReference type="PDB" id="7Q08">
    <property type="method" value="EM"/>
    <property type="resolution" value="2.56 A"/>
    <property type="chains" value="AM=1-51"/>
</dbReference>
<dbReference type="PDB" id="7Q0F">
    <property type="method" value="EM"/>
    <property type="resolution" value="2.64 A"/>
    <property type="chains" value="AM=1-51"/>
</dbReference>
<dbReference type="PDB" id="7Q0P">
    <property type="method" value="EM"/>
    <property type="resolution" value="2.77 A"/>
    <property type="chains" value="AM=1-51"/>
</dbReference>
<dbReference type="PDB" id="7Q0R">
    <property type="method" value="EM"/>
    <property type="resolution" value="2.67 A"/>
    <property type="chains" value="AM=1-51"/>
</dbReference>
<dbReference type="PDBsum" id="7PZY"/>
<dbReference type="PDBsum" id="7Q08"/>
<dbReference type="PDBsum" id="7Q0F"/>
<dbReference type="PDBsum" id="7Q0P"/>
<dbReference type="PDBsum" id="7Q0R"/>
<dbReference type="EMDB" id="EMD-13737"/>
<dbReference type="EMDB" id="EMD-13741"/>
<dbReference type="EMDB" id="EMD-13744"/>
<dbReference type="EMDB" id="EMD-13749"/>
<dbReference type="EMDB" id="EMD-13750"/>
<dbReference type="SMR" id="A0A1D8PDT4"/>
<dbReference type="FunCoup" id="A0A1D8PDT4">
    <property type="interactions" value="362"/>
</dbReference>
<dbReference type="STRING" id="237561.A0A1D8PDT4"/>
<dbReference type="EnsemblFungi" id="C1_06470W_A-T">
    <property type="protein sequence ID" value="C1_06470W_A-T-p1"/>
    <property type="gene ID" value="C1_06470W_A"/>
</dbReference>
<dbReference type="GeneID" id="30515007"/>
<dbReference type="KEGG" id="cal:CAALFM_C106470WA"/>
<dbReference type="CGD" id="CAL0000189989">
    <property type="gene designation" value="orf19.6264.4"/>
</dbReference>
<dbReference type="VEuPathDB" id="FungiDB:C1_06470W_A"/>
<dbReference type="eggNOG" id="KOG0002">
    <property type="taxonomic scope" value="Eukaryota"/>
</dbReference>
<dbReference type="InParanoid" id="A0A1D8PDT4"/>
<dbReference type="OMA" id="RRTKMNI"/>
<dbReference type="OrthoDB" id="6332053at2759"/>
<dbReference type="Proteomes" id="UP000000559">
    <property type="component" value="Chromosome 1"/>
</dbReference>
<dbReference type="GO" id="GO:0022625">
    <property type="term" value="C:cytosolic large ribosomal subunit"/>
    <property type="evidence" value="ECO:0000318"/>
    <property type="project" value="GO_Central"/>
</dbReference>
<dbReference type="GO" id="GO:0030684">
    <property type="term" value="C:preribosome"/>
    <property type="evidence" value="ECO:0007669"/>
    <property type="project" value="EnsemblFungi"/>
</dbReference>
<dbReference type="GO" id="GO:0003735">
    <property type="term" value="F:structural constituent of ribosome"/>
    <property type="evidence" value="ECO:0007669"/>
    <property type="project" value="InterPro"/>
</dbReference>
<dbReference type="GO" id="GO:0006412">
    <property type="term" value="P:translation"/>
    <property type="evidence" value="ECO:0007669"/>
    <property type="project" value="InterPro"/>
</dbReference>
<dbReference type="FunFam" id="1.10.1620.10:FF:000001">
    <property type="entry name" value="60S ribosomal protein-like L39"/>
    <property type="match status" value="1"/>
</dbReference>
<dbReference type="Gene3D" id="1.10.1620.10">
    <property type="entry name" value="Ribosomal protein L39e"/>
    <property type="match status" value="1"/>
</dbReference>
<dbReference type="HAMAP" id="MF_00629">
    <property type="entry name" value="Ribosomal_eL39"/>
    <property type="match status" value="1"/>
</dbReference>
<dbReference type="InterPro" id="IPR000077">
    <property type="entry name" value="Ribosomal_eL39"/>
</dbReference>
<dbReference type="InterPro" id="IPR020083">
    <property type="entry name" value="Ribosomal_eL39_CS"/>
</dbReference>
<dbReference type="InterPro" id="IPR023626">
    <property type="entry name" value="Ribosomal_eL39_dom_sf"/>
</dbReference>
<dbReference type="PANTHER" id="PTHR19970:SF0">
    <property type="entry name" value="LARGE RIBOSOMAL SUBUNIT PROTEIN EL39"/>
    <property type="match status" value="1"/>
</dbReference>
<dbReference type="PANTHER" id="PTHR19970">
    <property type="entry name" value="RIBOSOMAL PROTEIN L39E"/>
    <property type="match status" value="1"/>
</dbReference>
<dbReference type="Pfam" id="PF00832">
    <property type="entry name" value="Ribosomal_L39"/>
    <property type="match status" value="1"/>
</dbReference>
<dbReference type="SUPFAM" id="SSF48662">
    <property type="entry name" value="Ribosomal protein L39e"/>
    <property type="match status" value="1"/>
</dbReference>
<dbReference type="PROSITE" id="PS00051">
    <property type="entry name" value="RIBOSOMAL_L39E"/>
    <property type="match status" value="1"/>
</dbReference>
<name>RL39_CANAL</name>